<accession>Q51795</accession>
<protein>
    <recommendedName>
        <fullName>Protein FrxA</fullName>
    </recommendedName>
</protein>
<reference key="1">
    <citation type="journal article" date="1996" name="J. Bacteriol.">
        <title>Molecular and phylogenetic characterization of pyruvate and 2-ketoisovalerate ferredoxin oxidoreductases from Pyrococcus furiosus and pyruvate ferredoxin oxidoreductase from Thermotoga maritima.</title>
        <authorList>
            <person name="Kletzin A."/>
            <person name="Adams M.W.W."/>
        </authorList>
    </citation>
    <scope>NUCLEOTIDE SEQUENCE [GENOMIC DNA]</scope>
    <source>
        <strain>ATCC 43587 / DSM 3638 / JCM 8422 / Vc1</strain>
    </source>
</reference>
<reference key="2">
    <citation type="journal article" date="1999" name="Genetics">
        <title>Divergence of the hyperthermophilic archaea Pyrococcus furiosus and P. horikoshii inferred from complete genomic sequences.</title>
        <authorList>
            <person name="Maeder D.L."/>
            <person name="Weiss R.B."/>
            <person name="Dunn D.M."/>
            <person name="Cherry J.L."/>
            <person name="Gonzalez J.M."/>
            <person name="DiRuggiero J."/>
            <person name="Robb F.T."/>
        </authorList>
    </citation>
    <scope>NUCLEOTIDE SEQUENCE [LARGE SCALE GENOMIC DNA]</scope>
    <source>
        <strain>ATCC 43587 / DSM 3638 / JCM 8422 / Vc1</strain>
    </source>
</reference>
<organism>
    <name type="scientific">Pyrococcus furiosus (strain ATCC 43587 / DSM 3638 / JCM 8422 / Vc1)</name>
    <dbReference type="NCBI Taxonomy" id="186497"/>
    <lineage>
        <taxon>Archaea</taxon>
        <taxon>Methanobacteriati</taxon>
        <taxon>Methanobacteriota</taxon>
        <taxon>Thermococci</taxon>
        <taxon>Thermococcales</taxon>
        <taxon>Thermococcaceae</taxon>
        <taxon>Pyrococcus</taxon>
    </lineage>
</organism>
<sequence length="137" mass="15365">MGDDGVGIKIGRELKRQGYKVEELGTDIFSLMRVYNGENKVIIVDAVLGEIPGKVVYFKGEDIFKKLRAEIRSAHFMGAVEGLKLLLEVDERLKNAELHFVGVTIKEPKLGLELSEEVKRAIPRAMELILSIIREGE</sequence>
<name>FRXA_PYRFU</name>
<gene>
    <name type="primary">frxA</name>
    <name type="ordered locus">PF0975</name>
</gene>
<keyword id="KW-1185">Reference proteome</keyword>
<proteinExistence type="predicted"/>
<dbReference type="EMBL" id="X85250">
    <property type="protein sequence ID" value="CAA59496.1"/>
    <property type="molecule type" value="Genomic_DNA"/>
</dbReference>
<dbReference type="EMBL" id="AE009950">
    <property type="protein sequence ID" value="AAL81099.1"/>
    <property type="molecule type" value="Genomic_DNA"/>
</dbReference>
<dbReference type="PIR" id="T45079">
    <property type="entry name" value="T45079"/>
</dbReference>
<dbReference type="SMR" id="Q51795"/>
<dbReference type="STRING" id="186497.PF0975"/>
<dbReference type="MEROPS" id="A31.006"/>
<dbReference type="PaxDb" id="186497-PF0975"/>
<dbReference type="KEGG" id="pfu:PF0975"/>
<dbReference type="PATRIC" id="fig|186497.12.peg.1034"/>
<dbReference type="eggNOG" id="arCOG04429">
    <property type="taxonomic scope" value="Archaea"/>
</dbReference>
<dbReference type="HOGENOM" id="CLU_099037_1_0_2"/>
<dbReference type="PhylomeDB" id="Q51795"/>
<dbReference type="Proteomes" id="UP000001013">
    <property type="component" value="Chromosome"/>
</dbReference>
<dbReference type="GO" id="GO:0004175">
    <property type="term" value="F:endopeptidase activity"/>
    <property type="evidence" value="ECO:0007669"/>
    <property type="project" value="TreeGrafter"/>
</dbReference>
<dbReference type="GO" id="GO:0008047">
    <property type="term" value="F:enzyme activator activity"/>
    <property type="evidence" value="ECO:0007669"/>
    <property type="project" value="InterPro"/>
</dbReference>
<dbReference type="GO" id="GO:0016485">
    <property type="term" value="P:protein processing"/>
    <property type="evidence" value="ECO:0007669"/>
    <property type="project" value="TreeGrafter"/>
</dbReference>
<dbReference type="CDD" id="cd00518">
    <property type="entry name" value="H2MP"/>
    <property type="match status" value="1"/>
</dbReference>
<dbReference type="Gene3D" id="3.40.50.1450">
    <property type="entry name" value="HybD-like"/>
    <property type="match status" value="1"/>
</dbReference>
<dbReference type="InterPro" id="IPR023430">
    <property type="entry name" value="Pept_HybD-like_dom_sf"/>
</dbReference>
<dbReference type="InterPro" id="IPR000671">
    <property type="entry name" value="Peptidase_A31"/>
</dbReference>
<dbReference type="NCBIfam" id="TIGR00072">
    <property type="entry name" value="hydrog_prot"/>
    <property type="match status" value="1"/>
</dbReference>
<dbReference type="PANTHER" id="PTHR30302:SF7">
    <property type="entry name" value="F420-NONREDUCING HYDROGENASE II"/>
    <property type="match status" value="1"/>
</dbReference>
<dbReference type="PANTHER" id="PTHR30302">
    <property type="entry name" value="HYDROGENASE 1 MATURATION PROTEASE"/>
    <property type="match status" value="1"/>
</dbReference>
<dbReference type="Pfam" id="PF01750">
    <property type="entry name" value="HycI"/>
    <property type="match status" value="1"/>
</dbReference>
<dbReference type="SUPFAM" id="SSF53163">
    <property type="entry name" value="HybD-like"/>
    <property type="match status" value="1"/>
</dbReference>
<feature type="chain" id="PRO_0000087350" description="Protein FrxA">
    <location>
        <begin position="1"/>
        <end position="137"/>
    </location>
</feature>